<name>VANZ_ENTFC</name>
<feature type="chain" id="PRO_0000065762" description="Protein VanZ">
    <location>
        <begin position="1"/>
        <end position="161"/>
    </location>
</feature>
<dbReference type="EMBL" id="M97297">
    <property type="protein sequence ID" value="AAA65959.1"/>
    <property type="molecule type" value="Genomic_DNA"/>
</dbReference>
<dbReference type="RefSeq" id="YP_001019032.1">
    <property type="nucleotide sequence ID" value="NC_008821.1"/>
</dbReference>
<dbReference type="RefSeq" id="YP_001974793.1">
    <property type="nucleotide sequence ID" value="NC_010980.1"/>
</dbReference>
<dbReference type="RefSeq" id="YP_002128402.1">
    <property type="nucleotide sequence ID" value="NC_011140.1"/>
</dbReference>
<dbReference type="RefSeq" id="YP_004172612.1">
    <property type="nucleotide sequence ID" value="NC_014959.1"/>
</dbReference>
<dbReference type="RefSeq" id="YP_006937545.1">
    <property type="nucleotide sequence ID" value="NC_013317.1"/>
</dbReference>
<dbReference type="RefSeq" id="YP_007908265.1">
    <property type="nucleotide sequence ID" value="NC_021170.1"/>
</dbReference>
<dbReference type="RefSeq" id="YP_976074.1">
    <property type="nucleotide sequence ID" value="NC_008768.1"/>
</dbReference>
<dbReference type="CARD" id="ARO:3002962">
    <property type="molecule name" value="vanZ_in_vanA_cl"/>
    <property type="mechanism identifier" value="ARO:0001001"/>
    <property type="mechanism name" value="antibiotic target alteration"/>
</dbReference>
<dbReference type="GO" id="GO:0005576">
    <property type="term" value="C:extracellular region"/>
    <property type="evidence" value="ECO:0007669"/>
    <property type="project" value="UniProtKB-SubCell"/>
</dbReference>
<dbReference type="GO" id="GO:0071555">
    <property type="term" value="P:cell wall organization"/>
    <property type="evidence" value="ECO:0007669"/>
    <property type="project" value="UniProtKB-KW"/>
</dbReference>
<dbReference type="GO" id="GO:0046677">
    <property type="term" value="P:response to antibiotic"/>
    <property type="evidence" value="ECO:0007669"/>
    <property type="project" value="UniProtKB-KW"/>
</dbReference>
<dbReference type="InterPro" id="IPR053150">
    <property type="entry name" value="Teicoplanin_resist-assoc"/>
</dbReference>
<dbReference type="InterPro" id="IPR006976">
    <property type="entry name" value="VanZ-like"/>
</dbReference>
<dbReference type="NCBIfam" id="NF033125">
    <property type="entry name" value="vanZ-A"/>
    <property type="match status" value="1"/>
</dbReference>
<dbReference type="PANTHER" id="PTHR36834:SF2">
    <property type="entry name" value="MEMBRANE PROTEIN"/>
    <property type="match status" value="1"/>
</dbReference>
<dbReference type="PANTHER" id="PTHR36834">
    <property type="entry name" value="MEMBRANE PROTEIN-RELATED"/>
    <property type="match status" value="1"/>
</dbReference>
<dbReference type="Pfam" id="PF04892">
    <property type="entry name" value="VanZ"/>
    <property type="match status" value="1"/>
</dbReference>
<reference key="1">
    <citation type="journal article" date="1993" name="J. Bacteriol.">
        <title>Characterization of Tn1546, a Tn3-related transposon conferring glycopeptide resistance by synthesis of depsipeptide peptidoglycan precursors in Enterococcus faecium BM4147.</title>
        <authorList>
            <person name="Arthur M."/>
            <person name="Molinas C."/>
            <person name="Depardieu F."/>
            <person name="Courvalin P."/>
        </authorList>
    </citation>
    <scope>NUCLEOTIDE SEQUENCE [GENOMIC DNA]</scope>
    <source>
        <strain>BM4147</strain>
        <transposon>Tn1546</transposon>
    </source>
</reference>
<reference key="2">
    <citation type="journal article" date="1995" name="Gene">
        <title>The vanZ gene of Tn1546 from Enterococcus faecium BM4147 confers resistance to teicoplanin.</title>
        <authorList>
            <person name="Arthur M."/>
            <person name="Depardieu F."/>
            <person name="Molinas C."/>
            <person name="Reynolds P."/>
            <person name="Courvalin P."/>
        </authorList>
    </citation>
    <scope>NUCLEOTIDE SEQUENCE [GENOMIC DNA]</scope>
    <source>
        <strain>BM4147</strain>
        <transposon>Tn1546</transposon>
    </source>
</reference>
<gene>
    <name type="primary">vanZ</name>
</gene>
<organism>
    <name type="scientific">Enterococcus faecium</name>
    <name type="common">Streptococcus faecium</name>
    <dbReference type="NCBI Taxonomy" id="1352"/>
    <lineage>
        <taxon>Bacteria</taxon>
        <taxon>Bacillati</taxon>
        <taxon>Bacillota</taxon>
        <taxon>Bacilli</taxon>
        <taxon>Lactobacillales</taxon>
        <taxon>Enterococcaceae</taxon>
        <taxon>Enterococcus</taxon>
    </lineage>
</organism>
<geneLocation type="plasmid">
    <name>pIP816</name>
</geneLocation>
<accession>Q06242</accession>
<protein>
    <recommendedName>
        <fullName>Protein VanZ</fullName>
    </recommendedName>
</protein>
<evidence type="ECO:0000305" key="1"/>
<keyword id="KW-0046">Antibiotic resistance</keyword>
<keyword id="KW-0961">Cell wall biogenesis/degradation</keyword>
<keyword id="KW-0614">Plasmid</keyword>
<keyword id="KW-0964">Secreted</keyword>
<comment type="function">
    <text>Unknown. Confers low-level resistance to teicoplanin.</text>
</comment>
<comment type="subcellular location">
    <subcellularLocation>
        <location evidence="1">Secreted</location>
    </subcellularLocation>
</comment>
<proteinExistence type="predicted"/>
<sequence length="161" mass="18427">MGKILSRGLLALYLVTLIWLVLFKLQYNILSVFNYHQRSLNLTPFTATGNFREMIDNVIIFIPFGLLLNVNFKEIGFLPKFAFVLVLSLTFEIIQFIFAIGATDITDVITNTVGGFLGLKLYGLSNKHMNQKKLDRVIIFVGILLLVLLLVYRTHLRINYV</sequence>